<gene>
    <name evidence="1" type="primary">arnT1</name>
    <name type="ordered locus">SG0291</name>
</gene>
<evidence type="ECO:0000255" key="1">
    <source>
        <dbReference type="HAMAP-Rule" id="MF_01165"/>
    </source>
</evidence>
<reference key="1">
    <citation type="journal article" date="2006" name="Genome Res.">
        <title>Massive genome erosion and functional adaptations provide insights into the symbiotic lifestyle of Sodalis glossinidius in the tsetse host.</title>
        <authorList>
            <person name="Toh H."/>
            <person name="Weiss B.L."/>
            <person name="Perkin S.A.H."/>
            <person name="Yamashita A."/>
            <person name="Oshima K."/>
            <person name="Hattori M."/>
            <person name="Aksoy S."/>
        </authorList>
    </citation>
    <scope>NUCLEOTIDE SEQUENCE [LARGE SCALE GENOMIC DNA]</scope>
    <source>
        <strain>morsitans</strain>
    </source>
</reference>
<keyword id="KW-0997">Cell inner membrane</keyword>
<keyword id="KW-1003">Cell membrane</keyword>
<keyword id="KW-0328">Glycosyltransferase</keyword>
<keyword id="KW-0441">Lipid A biosynthesis</keyword>
<keyword id="KW-0444">Lipid biosynthesis</keyword>
<keyword id="KW-0443">Lipid metabolism</keyword>
<keyword id="KW-0448">Lipopolysaccharide biosynthesis</keyword>
<keyword id="KW-0472">Membrane</keyword>
<keyword id="KW-0808">Transferase</keyword>
<keyword id="KW-0812">Transmembrane</keyword>
<keyword id="KW-1133">Transmembrane helix</keyword>
<accession>Q2NWA9</accession>
<feature type="chain" id="PRO_0000380041" description="Undecaprenyl phosphate-alpha-4-amino-4-deoxy-L-arabinose arabinosyl transferase 1">
    <location>
        <begin position="1"/>
        <end position="558"/>
    </location>
</feature>
<feature type="transmembrane region" description="Helical" evidence="1">
    <location>
        <begin position="4"/>
        <end position="24"/>
    </location>
</feature>
<feature type="transmembrane region" description="Helical" evidence="1">
    <location>
        <begin position="87"/>
        <end position="107"/>
    </location>
</feature>
<feature type="transmembrane region" description="Helical" evidence="1">
    <location>
        <begin position="115"/>
        <end position="135"/>
    </location>
</feature>
<feature type="transmembrane region" description="Helical" evidence="1">
    <location>
        <begin position="136"/>
        <end position="156"/>
    </location>
</feature>
<feature type="transmembrane region" description="Helical" evidence="1">
    <location>
        <begin position="178"/>
        <end position="198"/>
    </location>
</feature>
<feature type="transmembrane region" description="Helical" evidence="1">
    <location>
        <begin position="207"/>
        <end position="227"/>
    </location>
</feature>
<feature type="transmembrane region" description="Helical" evidence="1">
    <location>
        <begin position="257"/>
        <end position="277"/>
    </location>
</feature>
<feature type="transmembrane region" description="Helical" evidence="1">
    <location>
        <begin position="295"/>
        <end position="315"/>
    </location>
</feature>
<feature type="transmembrane region" description="Helical" evidence="1">
    <location>
        <begin position="316"/>
        <end position="336"/>
    </location>
</feature>
<feature type="transmembrane region" description="Helical" evidence="1">
    <location>
        <begin position="355"/>
        <end position="375"/>
    </location>
</feature>
<feature type="transmembrane region" description="Helical" evidence="1">
    <location>
        <begin position="383"/>
        <end position="403"/>
    </location>
</feature>
<feature type="transmembrane region" description="Helical" evidence="1">
    <location>
        <begin position="411"/>
        <end position="431"/>
    </location>
</feature>
<dbReference type="EC" id="2.4.2.43" evidence="1"/>
<dbReference type="EMBL" id="AP008232">
    <property type="protein sequence ID" value="BAE73566.1"/>
    <property type="molecule type" value="Genomic_DNA"/>
</dbReference>
<dbReference type="RefSeq" id="WP_011410154.1">
    <property type="nucleotide sequence ID" value="NC_007712.1"/>
</dbReference>
<dbReference type="SMR" id="Q2NWA9"/>
<dbReference type="STRING" id="343509.SG0291"/>
<dbReference type="CAZy" id="GT83">
    <property type="family name" value="Glycosyltransferase Family 83"/>
</dbReference>
<dbReference type="KEGG" id="sgl:SG0291"/>
<dbReference type="eggNOG" id="COG1807">
    <property type="taxonomic scope" value="Bacteria"/>
</dbReference>
<dbReference type="HOGENOM" id="CLU_019200_2_1_6"/>
<dbReference type="OrthoDB" id="9775035at2"/>
<dbReference type="BioCyc" id="SGLO343509:SGP1_RS02665-MONOMER"/>
<dbReference type="UniPathway" id="UPA00037"/>
<dbReference type="Proteomes" id="UP000001932">
    <property type="component" value="Chromosome"/>
</dbReference>
<dbReference type="GO" id="GO:0005886">
    <property type="term" value="C:plasma membrane"/>
    <property type="evidence" value="ECO:0007669"/>
    <property type="project" value="UniProtKB-SubCell"/>
</dbReference>
<dbReference type="GO" id="GO:0103015">
    <property type="term" value="F:4-amino-4-deoxy-L-arabinose transferase activity"/>
    <property type="evidence" value="ECO:0007669"/>
    <property type="project" value="UniProtKB-EC"/>
</dbReference>
<dbReference type="GO" id="GO:0000030">
    <property type="term" value="F:mannosyltransferase activity"/>
    <property type="evidence" value="ECO:0007669"/>
    <property type="project" value="InterPro"/>
</dbReference>
<dbReference type="GO" id="GO:0009245">
    <property type="term" value="P:lipid A biosynthetic process"/>
    <property type="evidence" value="ECO:0007669"/>
    <property type="project" value="UniProtKB-UniRule"/>
</dbReference>
<dbReference type="GO" id="GO:0009103">
    <property type="term" value="P:lipopolysaccharide biosynthetic process"/>
    <property type="evidence" value="ECO:0007669"/>
    <property type="project" value="UniProtKB-KW"/>
</dbReference>
<dbReference type="GO" id="GO:0006493">
    <property type="term" value="P:protein O-linked glycosylation"/>
    <property type="evidence" value="ECO:0007669"/>
    <property type="project" value="InterPro"/>
</dbReference>
<dbReference type="GO" id="GO:0010041">
    <property type="term" value="P:response to iron(III) ion"/>
    <property type="evidence" value="ECO:0007669"/>
    <property type="project" value="TreeGrafter"/>
</dbReference>
<dbReference type="HAMAP" id="MF_01165">
    <property type="entry name" value="ArnT_transfer"/>
    <property type="match status" value="1"/>
</dbReference>
<dbReference type="InterPro" id="IPR022839">
    <property type="entry name" value="ArnT_tfrase"/>
</dbReference>
<dbReference type="InterPro" id="IPR003342">
    <property type="entry name" value="Glyco_trans_39/83"/>
</dbReference>
<dbReference type="InterPro" id="IPR050297">
    <property type="entry name" value="LipidA_mod_glycosyltrf_83"/>
</dbReference>
<dbReference type="NCBIfam" id="NF009784">
    <property type="entry name" value="PRK13279.1"/>
    <property type="match status" value="1"/>
</dbReference>
<dbReference type="PANTHER" id="PTHR33908">
    <property type="entry name" value="MANNOSYLTRANSFERASE YKCB-RELATED"/>
    <property type="match status" value="1"/>
</dbReference>
<dbReference type="PANTHER" id="PTHR33908:SF3">
    <property type="entry name" value="UNDECAPRENYL PHOSPHATE-ALPHA-4-AMINO-4-DEOXY-L-ARABINOSE ARABINOSYL TRANSFERASE"/>
    <property type="match status" value="1"/>
</dbReference>
<dbReference type="Pfam" id="PF02366">
    <property type="entry name" value="PMT"/>
    <property type="match status" value="1"/>
</dbReference>
<sequence length="558" mass="62580">MERGAGLWLGLLAVFFVLTYLVPLEGRLLWQPDETRYAEISREMLASGDWMVPHLLGLRYFEKPLAGYWMNNIGQWLFGSTNFAVRFASVFSTGLSALLVFTVSWTVGRQLRQSLLAALIFLSLLLVFGVGTYSVLDPMIALWLNAAMAAHVFALRADRRTTRGVAWLLLGLACGLGFMTKGFLALVVPAIAVLPVALYYRQLKATLGYGALAALLAVLVNLPWALALSRLEPDFWHYFFWVEHIQRFAAENAQHRAPFWFYLPVLALGSLPWLGLLPGAMAAGWRARRVQPERFLLLCWVVMPLLFFSVAKGKLLTYILPCMAPLALLLAAYGRECADKLRSKVFDANAGINTAFALCAIVALLLAGSGLLPWARIYSVGEWPRIVIGTLVFAGWLCFAAVSRRSQGDRWALAAFCPLLLSLLVGQIIPQRIIDGNQPQEFIRRYETTLNQSRYVLSNHVGVATALAWELERNDVLMYDDKGELAYGLEYADVQGRHLSRDDFPHWLAKERLKGDVALLLLLDRRQDLPPGLPKADKVHRNHRIALLHYQQLPCCEQ</sequence>
<organism>
    <name type="scientific">Sodalis glossinidius (strain morsitans)</name>
    <dbReference type="NCBI Taxonomy" id="343509"/>
    <lineage>
        <taxon>Bacteria</taxon>
        <taxon>Pseudomonadati</taxon>
        <taxon>Pseudomonadota</taxon>
        <taxon>Gammaproteobacteria</taxon>
        <taxon>Enterobacterales</taxon>
        <taxon>Bruguierivoracaceae</taxon>
        <taxon>Sodalis</taxon>
    </lineage>
</organism>
<name>ARNT1_SODGM</name>
<protein>
    <recommendedName>
        <fullName evidence="1">Undecaprenyl phosphate-alpha-4-amino-4-deoxy-L-arabinose arabinosyl transferase 1</fullName>
        <ecNumber evidence="1">2.4.2.43</ecNumber>
    </recommendedName>
    <alternativeName>
        <fullName evidence="1">4-amino-4-deoxy-L-arabinose lipid A transferase 1</fullName>
    </alternativeName>
    <alternativeName>
        <fullName evidence="1">Lipid IV(A) 4-amino-4-deoxy-L-arabinosyltransferase</fullName>
    </alternativeName>
    <alternativeName>
        <fullName evidence="1">Undecaprenyl phosphate-alpha-L-Ara4N transferase 1</fullName>
    </alternativeName>
</protein>
<comment type="function">
    <text evidence="1">Catalyzes the transfer of the L-Ara4N moiety of the glycolipid undecaprenyl phosphate-alpha-L-Ara4N to lipid A. The modified arabinose is attached to lipid A and is required for resistance to polymyxin and cationic antimicrobial peptides.</text>
</comment>
<comment type="catalytic activity">
    <reaction evidence="1">
        <text>4-amino-4-deoxy-alpha-L-arabinopyranosyl di-trans,octa-cis-undecaprenyl phosphate + lipid IVA = lipid IIA + di-trans,octa-cis-undecaprenyl phosphate.</text>
        <dbReference type="EC" id="2.4.2.43"/>
    </reaction>
</comment>
<comment type="pathway">
    <text evidence="1">Lipopolysaccharide metabolism; 4-amino-4-deoxy-beta-L-arabinose-lipid A biosynthesis.</text>
</comment>
<comment type="subcellular location">
    <subcellularLocation>
        <location evidence="1">Cell inner membrane</location>
        <topology evidence="1">Multi-pass membrane protein</topology>
    </subcellularLocation>
</comment>
<comment type="similarity">
    <text evidence="1">Belongs to the glycosyltransferase 83 family.</text>
</comment>
<proteinExistence type="inferred from homology"/>